<protein>
    <recommendedName>
        <fullName evidence="1">Large ribosomal subunit protein bL9</fullName>
    </recommendedName>
    <alternativeName>
        <fullName evidence="2">50S ribosomal protein L9</fullName>
    </alternativeName>
</protein>
<feature type="chain" id="PRO_1000014836" description="Large ribosomal subunit protein bL9">
    <location>
        <begin position="1"/>
        <end position="148"/>
    </location>
</feature>
<organism>
    <name type="scientific">Pseudomonas paraeruginosa (strain DSM 24068 / PA7)</name>
    <name type="common">Pseudomonas aeruginosa (strain PA7)</name>
    <dbReference type="NCBI Taxonomy" id="381754"/>
    <lineage>
        <taxon>Bacteria</taxon>
        <taxon>Pseudomonadati</taxon>
        <taxon>Pseudomonadota</taxon>
        <taxon>Gammaproteobacteria</taxon>
        <taxon>Pseudomonadales</taxon>
        <taxon>Pseudomonadaceae</taxon>
        <taxon>Pseudomonas</taxon>
        <taxon>Pseudomonas paraeruginosa</taxon>
    </lineage>
</organism>
<sequence>MEVILLEKVANLGNLGDKVNIKGGYARNFLLPQGKATVATAENVAAFEARRAELEKAAAEKKAAAEARAAQLSELVVTLGAHAGDEGKLFGSIGTRDIAEAVSAAGYPLEKAEVRLPNGALRNTGEFDVAVHLHTDVETTLKLIIVAE</sequence>
<comment type="function">
    <text evidence="1">Binds to the 23S rRNA.</text>
</comment>
<comment type="similarity">
    <text evidence="1">Belongs to the bacterial ribosomal protein bL9 family.</text>
</comment>
<dbReference type="EMBL" id="CP000744">
    <property type="protein sequence ID" value="ABR84100.1"/>
    <property type="molecule type" value="Genomic_DNA"/>
</dbReference>
<dbReference type="RefSeq" id="WP_003095627.1">
    <property type="nucleotide sequence ID" value="NC_009656.1"/>
</dbReference>
<dbReference type="SMR" id="A6VD45"/>
<dbReference type="GeneID" id="77223479"/>
<dbReference type="KEGG" id="pap:PSPA7_5659"/>
<dbReference type="HOGENOM" id="CLU_078938_4_1_6"/>
<dbReference type="Proteomes" id="UP000001582">
    <property type="component" value="Chromosome"/>
</dbReference>
<dbReference type="GO" id="GO:1990904">
    <property type="term" value="C:ribonucleoprotein complex"/>
    <property type="evidence" value="ECO:0007669"/>
    <property type="project" value="UniProtKB-KW"/>
</dbReference>
<dbReference type="GO" id="GO:0005840">
    <property type="term" value="C:ribosome"/>
    <property type="evidence" value="ECO:0007669"/>
    <property type="project" value="UniProtKB-KW"/>
</dbReference>
<dbReference type="GO" id="GO:0019843">
    <property type="term" value="F:rRNA binding"/>
    <property type="evidence" value="ECO:0007669"/>
    <property type="project" value="UniProtKB-UniRule"/>
</dbReference>
<dbReference type="GO" id="GO:0003735">
    <property type="term" value="F:structural constituent of ribosome"/>
    <property type="evidence" value="ECO:0007669"/>
    <property type="project" value="InterPro"/>
</dbReference>
<dbReference type="GO" id="GO:0006412">
    <property type="term" value="P:translation"/>
    <property type="evidence" value="ECO:0007669"/>
    <property type="project" value="UniProtKB-UniRule"/>
</dbReference>
<dbReference type="FunFam" id="3.40.5.10:FF:000001">
    <property type="entry name" value="50S ribosomal protein L9"/>
    <property type="match status" value="1"/>
</dbReference>
<dbReference type="Gene3D" id="3.10.430.100">
    <property type="entry name" value="Ribosomal protein L9, C-terminal domain"/>
    <property type="match status" value="1"/>
</dbReference>
<dbReference type="Gene3D" id="3.40.5.10">
    <property type="entry name" value="Ribosomal protein L9, N-terminal domain"/>
    <property type="match status" value="1"/>
</dbReference>
<dbReference type="HAMAP" id="MF_00503">
    <property type="entry name" value="Ribosomal_bL9"/>
    <property type="match status" value="1"/>
</dbReference>
<dbReference type="InterPro" id="IPR000244">
    <property type="entry name" value="Ribosomal_bL9"/>
</dbReference>
<dbReference type="InterPro" id="IPR009027">
    <property type="entry name" value="Ribosomal_bL9/RNase_H1_N"/>
</dbReference>
<dbReference type="InterPro" id="IPR020594">
    <property type="entry name" value="Ribosomal_bL9_bac/chp"/>
</dbReference>
<dbReference type="InterPro" id="IPR020069">
    <property type="entry name" value="Ribosomal_bL9_C"/>
</dbReference>
<dbReference type="InterPro" id="IPR036791">
    <property type="entry name" value="Ribosomal_bL9_C_sf"/>
</dbReference>
<dbReference type="InterPro" id="IPR020070">
    <property type="entry name" value="Ribosomal_bL9_N"/>
</dbReference>
<dbReference type="InterPro" id="IPR036935">
    <property type="entry name" value="Ribosomal_bL9_N_sf"/>
</dbReference>
<dbReference type="NCBIfam" id="TIGR00158">
    <property type="entry name" value="L9"/>
    <property type="match status" value="1"/>
</dbReference>
<dbReference type="PANTHER" id="PTHR21368">
    <property type="entry name" value="50S RIBOSOMAL PROTEIN L9"/>
    <property type="match status" value="1"/>
</dbReference>
<dbReference type="Pfam" id="PF03948">
    <property type="entry name" value="Ribosomal_L9_C"/>
    <property type="match status" value="1"/>
</dbReference>
<dbReference type="Pfam" id="PF01281">
    <property type="entry name" value="Ribosomal_L9_N"/>
    <property type="match status" value="1"/>
</dbReference>
<dbReference type="SUPFAM" id="SSF55658">
    <property type="entry name" value="L9 N-domain-like"/>
    <property type="match status" value="1"/>
</dbReference>
<dbReference type="SUPFAM" id="SSF55653">
    <property type="entry name" value="Ribosomal protein L9 C-domain"/>
    <property type="match status" value="1"/>
</dbReference>
<dbReference type="PROSITE" id="PS00651">
    <property type="entry name" value="RIBOSOMAL_L9"/>
    <property type="match status" value="1"/>
</dbReference>
<gene>
    <name evidence="1" type="primary">rplI</name>
    <name type="ordered locus">PSPA7_5659</name>
</gene>
<keyword id="KW-0687">Ribonucleoprotein</keyword>
<keyword id="KW-0689">Ribosomal protein</keyword>
<keyword id="KW-0694">RNA-binding</keyword>
<keyword id="KW-0699">rRNA-binding</keyword>
<proteinExistence type="inferred from homology"/>
<reference key="1">
    <citation type="submission" date="2007-06" db="EMBL/GenBank/DDBJ databases">
        <authorList>
            <person name="Dodson R.J."/>
            <person name="Harkins D."/>
            <person name="Paulsen I.T."/>
        </authorList>
    </citation>
    <scope>NUCLEOTIDE SEQUENCE [LARGE SCALE GENOMIC DNA]</scope>
    <source>
        <strain>DSM 24068 / PA7</strain>
    </source>
</reference>
<evidence type="ECO:0000255" key="1">
    <source>
        <dbReference type="HAMAP-Rule" id="MF_00503"/>
    </source>
</evidence>
<evidence type="ECO:0000305" key="2"/>
<accession>A6VD45</accession>
<name>RL9_PSEP7</name>